<name>RSMH_ACIBT</name>
<reference key="1">
    <citation type="journal article" date="2007" name="Genes Dev.">
        <title>New insights into Acinetobacter baumannii pathogenesis revealed by high-density pyrosequencing and transposon mutagenesis.</title>
        <authorList>
            <person name="Smith M.G."/>
            <person name="Gianoulis T.A."/>
            <person name="Pukatzki S."/>
            <person name="Mekalanos J.J."/>
            <person name="Ornston L.N."/>
            <person name="Gerstein M."/>
            <person name="Snyder M."/>
        </authorList>
    </citation>
    <scope>NUCLEOTIDE SEQUENCE [LARGE SCALE GENOMIC DNA]</scope>
    <source>
        <strain>ATCC 17978 / DSM 105126 / CIP 53.77 / LMG 1025 / NCDC KC755 / 5377</strain>
    </source>
</reference>
<gene>
    <name evidence="1" type="primary">rsmH</name>
    <name type="synonym">mraW</name>
    <name type="ordered locus">A1S_3206</name>
</gene>
<accession>A3M9K5</accession>
<organism>
    <name type="scientific">Acinetobacter baumannii (strain ATCC 17978 / DSM 105126 / CIP 53.77 / LMG 1025 / NCDC KC755 / 5377)</name>
    <dbReference type="NCBI Taxonomy" id="400667"/>
    <lineage>
        <taxon>Bacteria</taxon>
        <taxon>Pseudomonadati</taxon>
        <taxon>Pseudomonadota</taxon>
        <taxon>Gammaproteobacteria</taxon>
        <taxon>Moraxellales</taxon>
        <taxon>Moraxellaceae</taxon>
        <taxon>Acinetobacter</taxon>
        <taxon>Acinetobacter calcoaceticus/baumannii complex</taxon>
    </lineage>
</organism>
<protein>
    <recommendedName>
        <fullName evidence="1">Ribosomal RNA small subunit methyltransferase H</fullName>
        <ecNumber evidence="1">2.1.1.199</ecNumber>
    </recommendedName>
    <alternativeName>
        <fullName evidence="1">16S rRNA m(4)C1402 methyltransferase</fullName>
    </alternativeName>
    <alternativeName>
        <fullName evidence="1">rRNA (cytosine-N(4)-)-methyltransferase RsmH</fullName>
    </alternativeName>
</protein>
<keyword id="KW-0963">Cytoplasm</keyword>
<keyword id="KW-0489">Methyltransferase</keyword>
<keyword id="KW-0698">rRNA processing</keyword>
<keyword id="KW-0949">S-adenosyl-L-methionine</keyword>
<keyword id="KW-0808">Transferase</keyword>
<sequence length="307" mass="34670">MSHISVLLFETVESLLADRTTGVYIDATFGRGGHTRLLLSKLDENARVYAFDKDPQALEVAAALAQEDPRFTIIHASFADIKEKMQEIGVQSVDGIMADLGVSSPQLDQAERGFSFMQDGPLDMRMDNSKGLTAAEWLLEVEEEDLANIIYQYGEERYSRRIARAIKQAGKLDTTAQLAEIVKTAHPKWEKHKHPATRTFQAIRIAINKELDDIEVFLPQAVDLLKPKGRLSVISFHSLEDRLIKQFIQKESTLAEDSGWGMPQQQVDTRRLKKISRVRASEEEVKANPRSRSAWLRVAERLEQKGA</sequence>
<dbReference type="EC" id="2.1.1.199" evidence="1"/>
<dbReference type="EMBL" id="CP000521">
    <property type="protein sequence ID" value="ABO13599.2"/>
    <property type="molecule type" value="Genomic_DNA"/>
</dbReference>
<dbReference type="RefSeq" id="WP_000018346.1">
    <property type="nucleotide sequence ID" value="NZ_CP053098.1"/>
</dbReference>
<dbReference type="SMR" id="A3M9K5"/>
<dbReference type="GeneID" id="92895440"/>
<dbReference type="KEGG" id="acb:A1S_3206"/>
<dbReference type="HOGENOM" id="CLU_038422_2_0_6"/>
<dbReference type="GO" id="GO:0005737">
    <property type="term" value="C:cytoplasm"/>
    <property type="evidence" value="ECO:0007669"/>
    <property type="project" value="UniProtKB-SubCell"/>
</dbReference>
<dbReference type="GO" id="GO:0071424">
    <property type="term" value="F:rRNA (cytosine-N4-)-methyltransferase activity"/>
    <property type="evidence" value="ECO:0007669"/>
    <property type="project" value="UniProtKB-UniRule"/>
</dbReference>
<dbReference type="GO" id="GO:0070475">
    <property type="term" value="P:rRNA base methylation"/>
    <property type="evidence" value="ECO:0007669"/>
    <property type="project" value="UniProtKB-UniRule"/>
</dbReference>
<dbReference type="CDD" id="cd02440">
    <property type="entry name" value="AdoMet_MTases"/>
    <property type="match status" value="1"/>
</dbReference>
<dbReference type="FunFam" id="1.10.150.170:FF:000001">
    <property type="entry name" value="Ribosomal RNA small subunit methyltransferase H"/>
    <property type="match status" value="1"/>
</dbReference>
<dbReference type="Gene3D" id="1.10.150.170">
    <property type="entry name" value="Putative methyltransferase TM0872, insert domain"/>
    <property type="match status" value="1"/>
</dbReference>
<dbReference type="Gene3D" id="3.40.50.150">
    <property type="entry name" value="Vaccinia Virus protein VP39"/>
    <property type="match status" value="1"/>
</dbReference>
<dbReference type="HAMAP" id="MF_01007">
    <property type="entry name" value="16SrRNA_methyltr_H"/>
    <property type="match status" value="1"/>
</dbReference>
<dbReference type="InterPro" id="IPR002903">
    <property type="entry name" value="RsmH"/>
</dbReference>
<dbReference type="InterPro" id="IPR023397">
    <property type="entry name" value="SAM-dep_MeTrfase_MraW_recog"/>
</dbReference>
<dbReference type="InterPro" id="IPR029063">
    <property type="entry name" value="SAM-dependent_MTases_sf"/>
</dbReference>
<dbReference type="NCBIfam" id="TIGR00006">
    <property type="entry name" value="16S rRNA (cytosine(1402)-N(4))-methyltransferase RsmH"/>
    <property type="match status" value="1"/>
</dbReference>
<dbReference type="PANTHER" id="PTHR11265:SF0">
    <property type="entry name" value="12S RRNA N4-METHYLCYTIDINE METHYLTRANSFERASE"/>
    <property type="match status" value="1"/>
</dbReference>
<dbReference type="PANTHER" id="PTHR11265">
    <property type="entry name" value="S-ADENOSYL-METHYLTRANSFERASE MRAW"/>
    <property type="match status" value="1"/>
</dbReference>
<dbReference type="Pfam" id="PF01795">
    <property type="entry name" value="Methyltransf_5"/>
    <property type="match status" value="1"/>
</dbReference>
<dbReference type="PIRSF" id="PIRSF004486">
    <property type="entry name" value="MraW"/>
    <property type="match status" value="1"/>
</dbReference>
<dbReference type="SUPFAM" id="SSF81799">
    <property type="entry name" value="Putative methyltransferase TM0872, insert domain"/>
    <property type="match status" value="1"/>
</dbReference>
<dbReference type="SUPFAM" id="SSF53335">
    <property type="entry name" value="S-adenosyl-L-methionine-dependent methyltransferases"/>
    <property type="match status" value="1"/>
</dbReference>
<proteinExistence type="inferred from homology"/>
<comment type="function">
    <text evidence="1">Specifically methylates the N4 position of cytidine in position 1402 (C1402) of 16S rRNA.</text>
</comment>
<comment type="catalytic activity">
    <reaction evidence="1">
        <text>cytidine(1402) in 16S rRNA + S-adenosyl-L-methionine = N(4)-methylcytidine(1402) in 16S rRNA + S-adenosyl-L-homocysteine + H(+)</text>
        <dbReference type="Rhea" id="RHEA:42928"/>
        <dbReference type="Rhea" id="RHEA-COMP:10286"/>
        <dbReference type="Rhea" id="RHEA-COMP:10287"/>
        <dbReference type="ChEBI" id="CHEBI:15378"/>
        <dbReference type="ChEBI" id="CHEBI:57856"/>
        <dbReference type="ChEBI" id="CHEBI:59789"/>
        <dbReference type="ChEBI" id="CHEBI:74506"/>
        <dbReference type="ChEBI" id="CHEBI:82748"/>
        <dbReference type="EC" id="2.1.1.199"/>
    </reaction>
</comment>
<comment type="subcellular location">
    <subcellularLocation>
        <location evidence="1">Cytoplasm</location>
    </subcellularLocation>
</comment>
<comment type="similarity">
    <text evidence="1">Belongs to the methyltransferase superfamily. RsmH family.</text>
</comment>
<evidence type="ECO:0000255" key="1">
    <source>
        <dbReference type="HAMAP-Rule" id="MF_01007"/>
    </source>
</evidence>
<feature type="chain" id="PRO_0000386691" description="Ribosomal RNA small subunit methyltransferase H">
    <location>
        <begin position="1"/>
        <end position="307"/>
    </location>
</feature>
<feature type="binding site" evidence="1">
    <location>
        <begin position="32"/>
        <end position="34"/>
    </location>
    <ligand>
        <name>S-adenosyl-L-methionine</name>
        <dbReference type="ChEBI" id="CHEBI:59789"/>
    </ligand>
</feature>
<feature type="binding site" evidence="1">
    <location>
        <position position="52"/>
    </location>
    <ligand>
        <name>S-adenosyl-L-methionine</name>
        <dbReference type="ChEBI" id="CHEBI:59789"/>
    </ligand>
</feature>
<feature type="binding site" evidence="1">
    <location>
        <position position="78"/>
    </location>
    <ligand>
        <name>S-adenosyl-L-methionine</name>
        <dbReference type="ChEBI" id="CHEBI:59789"/>
    </ligand>
</feature>
<feature type="binding site" evidence="1">
    <location>
        <position position="99"/>
    </location>
    <ligand>
        <name>S-adenosyl-L-methionine</name>
        <dbReference type="ChEBI" id="CHEBI:59789"/>
    </ligand>
</feature>
<feature type="binding site" evidence="1">
    <location>
        <position position="106"/>
    </location>
    <ligand>
        <name>S-adenosyl-L-methionine</name>
        <dbReference type="ChEBI" id="CHEBI:59789"/>
    </ligand>
</feature>